<reference key="1">
    <citation type="journal article" date="2009" name="PLoS Genet.">
        <title>Organised genome dynamics in the Escherichia coli species results in highly diverse adaptive paths.</title>
        <authorList>
            <person name="Touchon M."/>
            <person name="Hoede C."/>
            <person name="Tenaillon O."/>
            <person name="Barbe V."/>
            <person name="Baeriswyl S."/>
            <person name="Bidet P."/>
            <person name="Bingen E."/>
            <person name="Bonacorsi S."/>
            <person name="Bouchier C."/>
            <person name="Bouvet O."/>
            <person name="Calteau A."/>
            <person name="Chiapello H."/>
            <person name="Clermont O."/>
            <person name="Cruveiller S."/>
            <person name="Danchin A."/>
            <person name="Diard M."/>
            <person name="Dossat C."/>
            <person name="Karoui M.E."/>
            <person name="Frapy E."/>
            <person name="Garry L."/>
            <person name="Ghigo J.M."/>
            <person name="Gilles A.M."/>
            <person name="Johnson J."/>
            <person name="Le Bouguenec C."/>
            <person name="Lescat M."/>
            <person name="Mangenot S."/>
            <person name="Martinez-Jehanne V."/>
            <person name="Matic I."/>
            <person name="Nassif X."/>
            <person name="Oztas S."/>
            <person name="Petit M.A."/>
            <person name="Pichon C."/>
            <person name="Rouy Z."/>
            <person name="Ruf C.S."/>
            <person name="Schneider D."/>
            <person name="Tourret J."/>
            <person name="Vacherie B."/>
            <person name="Vallenet D."/>
            <person name="Medigue C."/>
            <person name="Rocha E.P.C."/>
            <person name="Denamur E."/>
        </authorList>
    </citation>
    <scope>NUCLEOTIDE SEQUENCE [LARGE SCALE GENOMIC DNA]</scope>
    <source>
        <strain>ATCC 35469 / DSM 13698 / BCRC 15582 / CCUG 18766 / IAM 14443 / JCM 21226 / LMG 7866 / NBRC 102419 / NCTC 12128 / CDC 0568-73</strain>
    </source>
</reference>
<comment type="similarity">
    <text evidence="1">Belongs to the Smg family.</text>
</comment>
<proteinExistence type="inferred from homology"/>
<accession>B7LRQ1</accession>
<sequence length="157" mass="18483">MFDVLMYLFETYIHTEAELRVDQDKLEQDLTDAGFDREDIYNALLWLEKLADYQEGLAEPMQLASDPLSMRIYTPEECERLDASCRGFLLFLEQIQVLNLETREMVIERVLALDTAEFDLEDLKWVILMVLFNIPGCENAYQQMEELLFEVNEGMLH</sequence>
<feature type="chain" id="PRO_1000129892" description="Protein Smg">
    <location>
        <begin position="1"/>
        <end position="157"/>
    </location>
</feature>
<dbReference type="EMBL" id="CU928158">
    <property type="protein sequence ID" value="CAQ90748.1"/>
    <property type="molecule type" value="Genomic_DNA"/>
</dbReference>
<dbReference type="RefSeq" id="WP_000460672.1">
    <property type="nucleotide sequence ID" value="NC_011740.1"/>
</dbReference>
<dbReference type="SMR" id="B7LRQ1"/>
<dbReference type="GeneID" id="86948148"/>
<dbReference type="KEGG" id="efe:EFER_3268"/>
<dbReference type="HOGENOM" id="CLU_133242_0_0_6"/>
<dbReference type="OrthoDB" id="9788984at2"/>
<dbReference type="Proteomes" id="UP000000745">
    <property type="component" value="Chromosome"/>
</dbReference>
<dbReference type="HAMAP" id="MF_00598">
    <property type="entry name" value="Smg"/>
    <property type="match status" value="1"/>
</dbReference>
<dbReference type="InterPro" id="IPR007456">
    <property type="entry name" value="Smg"/>
</dbReference>
<dbReference type="NCBIfam" id="NF002897">
    <property type="entry name" value="PRK03430.1"/>
    <property type="match status" value="1"/>
</dbReference>
<dbReference type="PANTHER" id="PTHR38692">
    <property type="entry name" value="PROTEIN SMG"/>
    <property type="match status" value="1"/>
</dbReference>
<dbReference type="PANTHER" id="PTHR38692:SF1">
    <property type="entry name" value="PROTEIN SMG"/>
    <property type="match status" value="1"/>
</dbReference>
<dbReference type="Pfam" id="PF04361">
    <property type="entry name" value="DUF494"/>
    <property type="match status" value="1"/>
</dbReference>
<protein>
    <recommendedName>
        <fullName evidence="1">Protein Smg</fullName>
    </recommendedName>
</protein>
<name>SMG_ESCF3</name>
<evidence type="ECO:0000255" key="1">
    <source>
        <dbReference type="HAMAP-Rule" id="MF_00598"/>
    </source>
</evidence>
<gene>
    <name evidence="1" type="primary">smg</name>
    <name type="ordered locus">EFER_3268</name>
</gene>
<organism>
    <name type="scientific">Escherichia fergusonii (strain ATCC 35469 / DSM 13698 / CCUG 18766 / IAM 14443 / JCM 21226 / LMG 7866 / NBRC 102419 / NCTC 12128 / CDC 0568-73)</name>
    <dbReference type="NCBI Taxonomy" id="585054"/>
    <lineage>
        <taxon>Bacteria</taxon>
        <taxon>Pseudomonadati</taxon>
        <taxon>Pseudomonadota</taxon>
        <taxon>Gammaproteobacteria</taxon>
        <taxon>Enterobacterales</taxon>
        <taxon>Enterobacteriaceae</taxon>
        <taxon>Escherichia</taxon>
    </lineage>
</organism>